<reference key="1">
    <citation type="submission" date="2005-03" db="EMBL/GenBank/DDBJ databases">
        <title>Brevibacillus brevis strain 47, complete genome.</title>
        <authorList>
            <person name="Hosoyama A."/>
            <person name="Yamada R."/>
            <person name="Hongo Y."/>
            <person name="Terui Y."/>
            <person name="Ankai A."/>
            <person name="Masuyama W."/>
            <person name="Sekiguchi M."/>
            <person name="Takeda T."/>
            <person name="Asano K."/>
            <person name="Ohji S."/>
            <person name="Ichikawa N."/>
            <person name="Narita S."/>
            <person name="Aoki N."/>
            <person name="Miura H."/>
            <person name="Matsushita S."/>
            <person name="Sekigawa T."/>
            <person name="Yamagata H."/>
            <person name="Yoshikawa H."/>
            <person name="Udaka S."/>
            <person name="Tanikawa S."/>
            <person name="Fujita N."/>
        </authorList>
    </citation>
    <scope>NUCLEOTIDE SEQUENCE [LARGE SCALE GENOMIC DNA]</scope>
    <source>
        <strain>47 / JCM 6285 / NBRC 100599</strain>
    </source>
</reference>
<keyword id="KW-0067">ATP-binding</keyword>
<keyword id="KW-0963">Cytoplasm</keyword>
<keyword id="KW-0547">Nucleotide-binding</keyword>
<keyword id="KW-1185">Reference proteome</keyword>
<keyword id="KW-0694">RNA-binding</keyword>
<keyword id="KW-0784">Thiamine biosynthesis</keyword>
<keyword id="KW-0808">Transferase</keyword>
<keyword id="KW-0820">tRNA-binding</keyword>
<evidence type="ECO:0000255" key="1">
    <source>
        <dbReference type="HAMAP-Rule" id="MF_00021"/>
    </source>
</evidence>
<gene>
    <name evidence="1" type="primary">thiI</name>
    <name type="ordered locus">BBR47_41140</name>
</gene>
<name>THII_BREBN</name>
<comment type="function">
    <text evidence="1">Catalyzes the ATP-dependent transfer of a sulfur to tRNA to produce 4-thiouridine in position 8 of tRNAs, which functions as a near-UV photosensor. Also catalyzes the transfer of sulfur to the sulfur carrier protein ThiS, forming ThiS-thiocarboxylate. This is a step in the synthesis of thiazole, in the thiamine biosynthesis pathway. The sulfur is donated as persulfide by IscS.</text>
</comment>
<comment type="catalytic activity">
    <reaction evidence="1">
        <text>[ThiI sulfur-carrier protein]-S-sulfanyl-L-cysteine + a uridine in tRNA + 2 reduced [2Fe-2S]-[ferredoxin] + ATP + H(+) = [ThiI sulfur-carrier protein]-L-cysteine + a 4-thiouridine in tRNA + 2 oxidized [2Fe-2S]-[ferredoxin] + AMP + diphosphate</text>
        <dbReference type="Rhea" id="RHEA:24176"/>
        <dbReference type="Rhea" id="RHEA-COMP:10000"/>
        <dbReference type="Rhea" id="RHEA-COMP:10001"/>
        <dbReference type="Rhea" id="RHEA-COMP:13337"/>
        <dbReference type="Rhea" id="RHEA-COMP:13338"/>
        <dbReference type="Rhea" id="RHEA-COMP:13339"/>
        <dbReference type="Rhea" id="RHEA-COMP:13340"/>
        <dbReference type="ChEBI" id="CHEBI:15378"/>
        <dbReference type="ChEBI" id="CHEBI:29950"/>
        <dbReference type="ChEBI" id="CHEBI:30616"/>
        <dbReference type="ChEBI" id="CHEBI:33019"/>
        <dbReference type="ChEBI" id="CHEBI:33737"/>
        <dbReference type="ChEBI" id="CHEBI:33738"/>
        <dbReference type="ChEBI" id="CHEBI:61963"/>
        <dbReference type="ChEBI" id="CHEBI:65315"/>
        <dbReference type="ChEBI" id="CHEBI:136798"/>
        <dbReference type="ChEBI" id="CHEBI:456215"/>
        <dbReference type="EC" id="2.8.1.4"/>
    </reaction>
</comment>
<comment type="catalytic activity">
    <reaction evidence="1">
        <text>[ThiS sulfur-carrier protein]-C-terminal Gly-Gly-AMP + S-sulfanyl-L-cysteinyl-[cysteine desulfurase] + AH2 = [ThiS sulfur-carrier protein]-C-terminal-Gly-aminoethanethioate + L-cysteinyl-[cysteine desulfurase] + A + AMP + 2 H(+)</text>
        <dbReference type="Rhea" id="RHEA:43340"/>
        <dbReference type="Rhea" id="RHEA-COMP:12157"/>
        <dbReference type="Rhea" id="RHEA-COMP:12158"/>
        <dbReference type="Rhea" id="RHEA-COMP:12910"/>
        <dbReference type="Rhea" id="RHEA-COMP:19908"/>
        <dbReference type="ChEBI" id="CHEBI:13193"/>
        <dbReference type="ChEBI" id="CHEBI:15378"/>
        <dbReference type="ChEBI" id="CHEBI:17499"/>
        <dbReference type="ChEBI" id="CHEBI:29950"/>
        <dbReference type="ChEBI" id="CHEBI:61963"/>
        <dbReference type="ChEBI" id="CHEBI:90618"/>
        <dbReference type="ChEBI" id="CHEBI:232372"/>
        <dbReference type="ChEBI" id="CHEBI:456215"/>
    </reaction>
</comment>
<comment type="pathway">
    <text evidence="1">Cofactor biosynthesis; thiamine diphosphate biosynthesis.</text>
</comment>
<comment type="subcellular location">
    <subcellularLocation>
        <location evidence="1">Cytoplasm</location>
    </subcellularLocation>
</comment>
<comment type="similarity">
    <text evidence="1">Belongs to the ThiI family.</text>
</comment>
<accession>C0ZH32</accession>
<sequence>MNYDVILIRYGELALKGKNRDQFEEALVKSVRNVLRSFFKVKVRRNYGRMYVELHGEDAYAVMERLKRVFGISSFSPTIQVDPDIETIKEKALELVRQLNPQPRTFRVVSRRADKRYPIQSMEVNRMVATHILRALPAISVDLHEPDTIVNVEIRTEGTYISCETIKGLGGLPVGVSGKVLLLLSGGIDSPVAGWMMLKRGVTLEAIHFHSYPFTSERALQKVRDLAHKLTKWGGTVRLHVVPFTEIQTAIREKCPEDYLITIMRRFMMRISERVAENTNAKALATGESLGQVASQTLESMDTINKVISIPILRPLVAMDKVDIVDISRQIDTYELSILPYEDCCTVFTPKNPVTRPKPRLAAKFEEVLDVEALVEDAVARTEIEEITTKPKETTTDLF</sequence>
<dbReference type="EC" id="2.8.1.4" evidence="1"/>
<dbReference type="EMBL" id="AP008955">
    <property type="protein sequence ID" value="BAH45091.1"/>
    <property type="molecule type" value="Genomic_DNA"/>
</dbReference>
<dbReference type="RefSeq" id="WP_015892361.1">
    <property type="nucleotide sequence ID" value="NC_012491.1"/>
</dbReference>
<dbReference type="SMR" id="C0ZH32"/>
<dbReference type="STRING" id="358681.BBR47_41140"/>
<dbReference type="KEGG" id="bbe:BBR47_41140"/>
<dbReference type="eggNOG" id="COG0301">
    <property type="taxonomic scope" value="Bacteria"/>
</dbReference>
<dbReference type="HOGENOM" id="CLU_037952_4_0_9"/>
<dbReference type="UniPathway" id="UPA00060"/>
<dbReference type="Proteomes" id="UP000001877">
    <property type="component" value="Chromosome"/>
</dbReference>
<dbReference type="GO" id="GO:0005829">
    <property type="term" value="C:cytosol"/>
    <property type="evidence" value="ECO:0007669"/>
    <property type="project" value="TreeGrafter"/>
</dbReference>
<dbReference type="GO" id="GO:0005524">
    <property type="term" value="F:ATP binding"/>
    <property type="evidence" value="ECO:0007669"/>
    <property type="project" value="UniProtKB-UniRule"/>
</dbReference>
<dbReference type="GO" id="GO:0004810">
    <property type="term" value="F:CCA tRNA nucleotidyltransferase activity"/>
    <property type="evidence" value="ECO:0007669"/>
    <property type="project" value="InterPro"/>
</dbReference>
<dbReference type="GO" id="GO:0000049">
    <property type="term" value="F:tRNA binding"/>
    <property type="evidence" value="ECO:0007669"/>
    <property type="project" value="UniProtKB-UniRule"/>
</dbReference>
<dbReference type="GO" id="GO:0140741">
    <property type="term" value="F:tRNA-uracil-4 sulfurtransferase activity"/>
    <property type="evidence" value="ECO:0007669"/>
    <property type="project" value="UniProtKB-EC"/>
</dbReference>
<dbReference type="GO" id="GO:0009228">
    <property type="term" value="P:thiamine biosynthetic process"/>
    <property type="evidence" value="ECO:0007669"/>
    <property type="project" value="UniProtKB-KW"/>
</dbReference>
<dbReference type="GO" id="GO:0009229">
    <property type="term" value="P:thiamine diphosphate biosynthetic process"/>
    <property type="evidence" value="ECO:0007669"/>
    <property type="project" value="UniProtKB-UniRule"/>
</dbReference>
<dbReference type="GO" id="GO:0052837">
    <property type="term" value="P:thiazole biosynthetic process"/>
    <property type="evidence" value="ECO:0007669"/>
    <property type="project" value="TreeGrafter"/>
</dbReference>
<dbReference type="GO" id="GO:0002937">
    <property type="term" value="P:tRNA 4-thiouridine biosynthesis"/>
    <property type="evidence" value="ECO:0007669"/>
    <property type="project" value="TreeGrafter"/>
</dbReference>
<dbReference type="CDD" id="cd01712">
    <property type="entry name" value="PPase_ThiI"/>
    <property type="match status" value="1"/>
</dbReference>
<dbReference type="CDD" id="cd11716">
    <property type="entry name" value="THUMP_ThiI"/>
    <property type="match status" value="1"/>
</dbReference>
<dbReference type="FunFam" id="3.40.50.620:FF:000053">
    <property type="entry name" value="Probable tRNA sulfurtransferase"/>
    <property type="match status" value="1"/>
</dbReference>
<dbReference type="Gene3D" id="3.30.2130.30">
    <property type="match status" value="1"/>
</dbReference>
<dbReference type="Gene3D" id="3.40.50.620">
    <property type="entry name" value="HUPs"/>
    <property type="match status" value="1"/>
</dbReference>
<dbReference type="HAMAP" id="MF_00021">
    <property type="entry name" value="ThiI"/>
    <property type="match status" value="1"/>
</dbReference>
<dbReference type="InterPro" id="IPR014729">
    <property type="entry name" value="Rossmann-like_a/b/a_fold"/>
</dbReference>
<dbReference type="InterPro" id="IPR020536">
    <property type="entry name" value="ThiI_AANH"/>
</dbReference>
<dbReference type="InterPro" id="IPR054173">
    <property type="entry name" value="ThiI_fer"/>
</dbReference>
<dbReference type="InterPro" id="IPR049961">
    <property type="entry name" value="ThiI_N"/>
</dbReference>
<dbReference type="InterPro" id="IPR004114">
    <property type="entry name" value="THUMP_dom"/>
</dbReference>
<dbReference type="InterPro" id="IPR049962">
    <property type="entry name" value="THUMP_ThiI"/>
</dbReference>
<dbReference type="InterPro" id="IPR003720">
    <property type="entry name" value="tRNA_STrfase"/>
</dbReference>
<dbReference type="InterPro" id="IPR050102">
    <property type="entry name" value="tRNA_sulfurtransferase_ThiI"/>
</dbReference>
<dbReference type="NCBIfam" id="TIGR00342">
    <property type="entry name" value="tRNA uracil 4-sulfurtransferase ThiI"/>
    <property type="match status" value="1"/>
</dbReference>
<dbReference type="PANTHER" id="PTHR43209">
    <property type="entry name" value="TRNA SULFURTRANSFERASE"/>
    <property type="match status" value="1"/>
</dbReference>
<dbReference type="PANTHER" id="PTHR43209:SF1">
    <property type="entry name" value="TRNA SULFURTRANSFERASE"/>
    <property type="match status" value="1"/>
</dbReference>
<dbReference type="Pfam" id="PF02568">
    <property type="entry name" value="ThiI"/>
    <property type="match status" value="1"/>
</dbReference>
<dbReference type="Pfam" id="PF22025">
    <property type="entry name" value="ThiI_fer"/>
    <property type="match status" value="1"/>
</dbReference>
<dbReference type="Pfam" id="PF02926">
    <property type="entry name" value="THUMP"/>
    <property type="match status" value="1"/>
</dbReference>
<dbReference type="SMART" id="SM00981">
    <property type="entry name" value="THUMP"/>
    <property type="match status" value="1"/>
</dbReference>
<dbReference type="SUPFAM" id="SSF52402">
    <property type="entry name" value="Adenine nucleotide alpha hydrolases-like"/>
    <property type="match status" value="1"/>
</dbReference>
<dbReference type="SUPFAM" id="SSF143437">
    <property type="entry name" value="THUMP domain-like"/>
    <property type="match status" value="1"/>
</dbReference>
<dbReference type="PROSITE" id="PS51165">
    <property type="entry name" value="THUMP"/>
    <property type="match status" value="1"/>
</dbReference>
<proteinExistence type="inferred from homology"/>
<protein>
    <recommendedName>
        <fullName evidence="1">Probable tRNA sulfurtransferase</fullName>
        <ecNumber evidence="1">2.8.1.4</ecNumber>
    </recommendedName>
    <alternativeName>
        <fullName evidence="1">Sulfur carrier protein ThiS sulfurtransferase</fullName>
    </alternativeName>
    <alternativeName>
        <fullName evidence="1">Thiamine biosynthesis protein ThiI</fullName>
    </alternativeName>
    <alternativeName>
        <fullName evidence="1">tRNA 4-thiouridine synthase</fullName>
    </alternativeName>
</protein>
<organism>
    <name type="scientific">Brevibacillus brevis (strain 47 / JCM 6285 / NBRC 100599)</name>
    <dbReference type="NCBI Taxonomy" id="358681"/>
    <lineage>
        <taxon>Bacteria</taxon>
        <taxon>Bacillati</taxon>
        <taxon>Bacillota</taxon>
        <taxon>Bacilli</taxon>
        <taxon>Bacillales</taxon>
        <taxon>Paenibacillaceae</taxon>
        <taxon>Brevibacillus</taxon>
    </lineage>
</organism>
<feature type="chain" id="PRO_1000196922" description="Probable tRNA sulfurtransferase">
    <location>
        <begin position="1"/>
        <end position="399"/>
    </location>
</feature>
<feature type="domain" description="THUMP" evidence="1">
    <location>
        <begin position="60"/>
        <end position="165"/>
    </location>
</feature>
<feature type="binding site" evidence="1">
    <location>
        <begin position="183"/>
        <end position="184"/>
    </location>
    <ligand>
        <name>ATP</name>
        <dbReference type="ChEBI" id="CHEBI:30616"/>
    </ligand>
</feature>
<feature type="binding site" evidence="1">
    <location>
        <begin position="208"/>
        <end position="209"/>
    </location>
    <ligand>
        <name>ATP</name>
        <dbReference type="ChEBI" id="CHEBI:30616"/>
    </ligand>
</feature>
<feature type="binding site" evidence="1">
    <location>
        <position position="265"/>
    </location>
    <ligand>
        <name>ATP</name>
        <dbReference type="ChEBI" id="CHEBI:30616"/>
    </ligand>
</feature>
<feature type="binding site" evidence="1">
    <location>
        <position position="287"/>
    </location>
    <ligand>
        <name>ATP</name>
        <dbReference type="ChEBI" id="CHEBI:30616"/>
    </ligand>
</feature>
<feature type="binding site" evidence="1">
    <location>
        <position position="296"/>
    </location>
    <ligand>
        <name>ATP</name>
        <dbReference type="ChEBI" id="CHEBI:30616"/>
    </ligand>
</feature>